<evidence type="ECO:0000255" key="1">
    <source>
        <dbReference type="HAMAP-Rule" id="MF_01657"/>
    </source>
</evidence>
<protein>
    <recommendedName>
        <fullName evidence="1">Acetaldehyde dehydrogenase</fullName>
        <ecNumber evidence="1">1.2.1.10</ecNumber>
    </recommendedName>
    <alternativeName>
        <fullName evidence="1">Acetaldehyde dehydrogenase [acetylating]</fullName>
    </alternativeName>
</protein>
<proteinExistence type="inferred from homology"/>
<organism>
    <name type="scientific">Escherichia coli O17:K52:H18 (strain UMN026 / ExPEC)</name>
    <dbReference type="NCBI Taxonomy" id="585056"/>
    <lineage>
        <taxon>Bacteria</taxon>
        <taxon>Pseudomonadati</taxon>
        <taxon>Pseudomonadota</taxon>
        <taxon>Gammaproteobacteria</taxon>
        <taxon>Enterobacterales</taxon>
        <taxon>Enterobacteriaceae</taxon>
        <taxon>Escherichia</taxon>
    </lineage>
</organism>
<keyword id="KW-0058">Aromatic hydrocarbons catabolism</keyword>
<keyword id="KW-0520">NAD</keyword>
<keyword id="KW-0560">Oxidoreductase</keyword>
<sequence length="316" mass="33501">MSKRKVAIIGSGNIGTDLMIKILRHGQHLEMAVMVGIDPQSDGLARARRMGVATTHEGVIGLMNMPEFADIDIVFDATSAGAHVKNDAALREAKPDIRLIDLTPAAIGPYCVPVVNLEENVDQLNVNMVTCGGQATIPMVAAVSRVARVHYAEIIASIASKSAGPGTRANIDEFTETTSRAIEVVGGAAKGKAIIVLNPAEPPLMMRDTVYVLSDEASQDDIEASINEMAEAVQAYVPGYRLKQRVQFEVIPQDKPVNLPGVGQFSGLKTAVWLEVEGAAHYLPAYAGNLDIMTSSALATAEKMAQSLARKAGEAA</sequence>
<name>ACDH_ECOLU</name>
<reference key="1">
    <citation type="journal article" date="2009" name="PLoS Genet.">
        <title>Organised genome dynamics in the Escherichia coli species results in highly diverse adaptive paths.</title>
        <authorList>
            <person name="Touchon M."/>
            <person name="Hoede C."/>
            <person name="Tenaillon O."/>
            <person name="Barbe V."/>
            <person name="Baeriswyl S."/>
            <person name="Bidet P."/>
            <person name="Bingen E."/>
            <person name="Bonacorsi S."/>
            <person name="Bouchier C."/>
            <person name="Bouvet O."/>
            <person name="Calteau A."/>
            <person name="Chiapello H."/>
            <person name="Clermont O."/>
            <person name="Cruveiller S."/>
            <person name="Danchin A."/>
            <person name="Diard M."/>
            <person name="Dossat C."/>
            <person name="Karoui M.E."/>
            <person name="Frapy E."/>
            <person name="Garry L."/>
            <person name="Ghigo J.M."/>
            <person name="Gilles A.M."/>
            <person name="Johnson J."/>
            <person name="Le Bouguenec C."/>
            <person name="Lescat M."/>
            <person name="Mangenot S."/>
            <person name="Martinez-Jehanne V."/>
            <person name="Matic I."/>
            <person name="Nassif X."/>
            <person name="Oztas S."/>
            <person name="Petit M.A."/>
            <person name="Pichon C."/>
            <person name="Rouy Z."/>
            <person name="Ruf C.S."/>
            <person name="Schneider D."/>
            <person name="Tourret J."/>
            <person name="Vacherie B."/>
            <person name="Vallenet D."/>
            <person name="Medigue C."/>
            <person name="Rocha E.P.C."/>
            <person name="Denamur E."/>
        </authorList>
    </citation>
    <scope>NUCLEOTIDE SEQUENCE [LARGE SCALE GENOMIC DNA]</scope>
    <source>
        <strain>UMN026 / ExPEC</strain>
    </source>
</reference>
<comment type="function">
    <text evidence="1">Catalyzes the conversion of acetaldehyde to acetyl-CoA, using NAD(+) and coenzyme A. Is the final enzyme in the meta-cleavage pathway for the degradation of aromatic compounds.</text>
</comment>
<comment type="catalytic activity">
    <reaction evidence="1">
        <text>acetaldehyde + NAD(+) + CoA = acetyl-CoA + NADH + H(+)</text>
        <dbReference type="Rhea" id="RHEA:23288"/>
        <dbReference type="ChEBI" id="CHEBI:15343"/>
        <dbReference type="ChEBI" id="CHEBI:15378"/>
        <dbReference type="ChEBI" id="CHEBI:57287"/>
        <dbReference type="ChEBI" id="CHEBI:57288"/>
        <dbReference type="ChEBI" id="CHEBI:57540"/>
        <dbReference type="ChEBI" id="CHEBI:57945"/>
        <dbReference type="EC" id="1.2.1.10"/>
    </reaction>
</comment>
<comment type="pathway">
    <text evidence="1">Aromatic compound metabolism; 3-phenylpropanoate degradation.</text>
</comment>
<comment type="subunit">
    <text evidence="1">Interacts with MhpE.</text>
</comment>
<comment type="similarity">
    <text evidence="1">Belongs to the acetaldehyde dehydrogenase family.</text>
</comment>
<gene>
    <name evidence="1" type="primary">mhpF</name>
    <name type="ordered locus">ECUMN_0394</name>
</gene>
<accession>B7N8Q8</accession>
<feature type="chain" id="PRO_1000187034" description="Acetaldehyde dehydrogenase">
    <location>
        <begin position="1"/>
        <end position="316"/>
    </location>
</feature>
<feature type="active site" description="Acyl-thioester intermediate" evidence="1">
    <location>
        <position position="131"/>
    </location>
</feature>
<feature type="binding site" evidence="1">
    <location>
        <begin position="11"/>
        <end position="14"/>
    </location>
    <ligand>
        <name>NAD(+)</name>
        <dbReference type="ChEBI" id="CHEBI:57540"/>
    </ligand>
</feature>
<feature type="binding site" evidence="1">
    <location>
        <begin position="162"/>
        <end position="170"/>
    </location>
    <ligand>
        <name>NAD(+)</name>
        <dbReference type="ChEBI" id="CHEBI:57540"/>
    </ligand>
</feature>
<feature type="binding site" evidence="1">
    <location>
        <position position="289"/>
    </location>
    <ligand>
        <name>NAD(+)</name>
        <dbReference type="ChEBI" id="CHEBI:57540"/>
    </ligand>
</feature>
<dbReference type="EC" id="1.2.1.10" evidence="1"/>
<dbReference type="EMBL" id="CU928163">
    <property type="protein sequence ID" value="CAR11609.1"/>
    <property type="molecule type" value="Genomic_DNA"/>
</dbReference>
<dbReference type="RefSeq" id="WP_000044321.1">
    <property type="nucleotide sequence ID" value="NC_011751.1"/>
</dbReference>
<dbReference type="RefSeq" id="YP_002411157.1">
    <property type="nucleotide sequence ID" value="NC_011751.1"/>
</dbReference>
<dbReference type="SMR" id="B7N8Q8"/>
<dbReference type="STRING" id="585056.ECUMN_0394"/>
<dbReference type="KEGG" id="eum:ECUMN_0394"/>
<dbReference type="PATRIC" id="fig|585056.7.peg.592"/>
<dbReference type="HOGENOM" id="CLU_062208_0_0_6"/>
<dbReference type="UniPathway" id="UPA00714"/>
<dbReference type="Proteomes" id="UP000007097">
    <property type="component" value="Chromosome"/>
</dbReference>
<dbReference type="GO" id="GO:0008774">
    <property type="term" value="F:acetaldehyde dehydrogenase (acetylating) activity"/>
    <property type="evidence" value="ECO:0007669"/>
    <property type="project" value="UniProtKB-UniRule"/>
</dbReference>
<dbReference type="GO" id="GO:0051287">
    <property type="term" value="F:NAD binding"/>
    <property type="evidence" value="ECO:0007669"/>
    <property type="project" value="UniProtKB-UniRule"/>
</dbReference>
<dbReference type="GO" id="GO:0019380">
    <property type="term" value="P:3-phenylpropionate catabolic process"/>
    <property type="evidence" value="ECO:0007669"/>
    <property type="project" value="UniProtKB-UniRule"/>
</dbReference>
<dbReference type="CDD" id="cd23933">
    <property type="entry name" value="ALDH_C"/>
    <property type="match status" value="1"/>
</dbReference>
<dbReference type="FunFam" id="3.30.360.10:FF:000021">
    <property type="entry name" value="Acetaldehyde dehydrogenase"/>
    <property type="match status" value="1"/>
</dbReference>
<dbReference type="Gene3D" id="3.30.360.10">
    <property type="entry name" value="Dihydrodipicolinate Reductase, domain 2"/>
    <property type="match status" value="1"/>
</dbReference>
<dbReference type="Gene3D" id="3.40.50.720">
    <property type="entry name" value="NAD(P)-binding Rossmann-like Domain"/>
    <property type="match status" value="1"/>
</dbReference>
<dbReference type="HAMAP" id="MF_01657">
    <property type="entry name" value="Ac_ald_DH_ac"/>
    <property type="match status" value="1"/>
</dbReference>
<dbReference type="InterPro" id="IPR003361">
    <property type="entry name" value="Acetaldehyde_dehydrogenase"/>
</dbReference>
<dbReference type="InterPro" id="IPR015426">
    <property type="entry name" value="Acetylaldehyde_DH_C"/>
</dbReference>
<dbReference type="InterPro" id="IPR036291">
    <property type="entry name" value="NAD(P)-bd_dom_sf"/>
</dbReference>
<dbReference type="InterPro" id="IPR000534">
    <property type="entry name" value="Semialdehyde_DH_NAD-bd"/>
</dbReference>
<dbReference type="NCBIfam" id="TIGR03215">
    <property type="entry name" value="ac_ald_DH_ac"/>
    <property type="match status" value="1"/>
</dbReference>
<dbReference type="NCBIfam" id="NF006157">
    <property type="entry name" value="PRK08300.1"/>
    <property type="match status" value="1"/>
</dbReference>
<dbReference type="Pfam" id="PF09290">
    <property type="entry name" value="AcetDehyd-dimer"/>
    <property type="match status" value="1"/>
</dbReference>
<dbReference type="Pfam" id="PF01118">
    <property type="entry name" value="Semialdhyde_dh"/>
    <property type="match status" value="1"/>
</dbReference>
<dbReference type="PIRSF" id="PIRSF015689">
    <property type="entry name" value="Actaldh_dh_actl"/>
    <property type="match status" value="1"/>
</dbReference>
<dbReference type="SMART" id="SM00859">
    <property type="entry name" value="Semialdhyde_dh"/>
    <property type="match status" value="1"/>
</dbReference>
<dbReference type="SUPFAM" id="SSF55347">
    <property type="entry name" value="Glyceraldehyde-3-phosphate dehydrogenase-like, C-terminal domain"/>
    <property type="match status" value="1"/>
</dbReference>
<dbReference type="SUPFAM" id="SSF51735">
    <property type="entry name" value="NAD(P)-binding Rossmann-fold domains"/>
    <property type="match status" value="1"/>
</dbReference>